<reference key="1">
    <citation type="journal article" date="2006" name="Genome Res.">
        <title>Skewed genomic variability in strains of the toxigenic bacterial pathogen, Clostridium perfringens.</title>
        <authorList>
            <person name="Myers G.S.A."/>
            <person name="Rasko D.A."/>
            <person name="Cheung J.K."/>
            <person name="Ravel J."/>
            <person name="Seshadri R."/>
            <person name="DeBoy R.T."/>
            <person name="Ren Q."/>
            <person name="Varga J."/>
            <person name="Awad M.M."/>
            <person name="Brinkac L.M."/>
            <person name="Daugherty S.C."/>
            <person name="Haft D.H."/>
            <person name="Dodson R.J."/>
            <person name="Madupu R."/>
            <person name="Nelson W.C."/>
            <person name="Rosovitz M.J."/>
            <person name="Sullivan S.A."/>
            <person name="Khouri H."/>
            <person name="Dimitrov G.I."/>
            <person name="Watkins K.L."/>
            <person name="Mulligan S."/>
            <person name="Benton J."/>
            <person name="Radune D."/>
            <person name="Fisher D.J."/>
            <person name="Atkins H.S."/>
            <person name="Hiscox T."/>
            <person name="Jost B.H."/>
            <person name="Billington S.J."/>
            <person name="Songer J.G."/>
            <person name="McClane B.A."/>
            <person name="Titball R.W."/>
            <person name="Rood J.I."/>
            <person name="Melville S.B."/>
            <person name="Paulsen I.T."/>
        </authorList>
    </citation>
    <scope>NUCLEOTIDE SEQUENCE [LARGE SCALE GENOMIC DNA]</scope>
    <source>
        <strain>SM101 / Type A</strain>
    </source>
</reference>
<name>CAPPA_CLOPS</name>
<proteinExistence type="inferred from homology"/>
<evidence type="ECO:0000255" key="1">
    <source>
        <dbReference type="HAMAP-Rule" id="MF_01904"/>
    </source>
</evidence>
<organism>
    <name type="scientific">Clostridium perfringens (strain SM101 / Type A)</name>
    <dbReference type="NCBI Taxonomy" id="289380"/>
    <lineage>
        <taxon>Bacteria</taxon>
        <taxon>Bacillati</taxon>
        <taxon>Bacillota</taxon>
        <taxon>Clostridia</taxon>
        <taxon>Eubacteriales</taxon>
        <taxon>Clostridiaceae</taxon>
        <taxon>Clostridium</taxon>
    </lineage>
</organism>
<keyword id="KW-0120">Carbon dioxide fixation</keyword>
<keyword id="KW-0456">Lyase</keyword>
<keyword id="KW-0460">Magnesium</keyword>
<comment type="function">
    <text evidence="1">Catalyzes the irreversible beta-carboxylation of phosphoenolpyruvate (PEP) to form oxaloacetate (OAA), a four-carbon dicarboxylic acid source for the tricarboxylic acid cycle.</text>
</comment>
<comment type="catalytic activity">
    <reaction evidence="1">
        <text>oxaloacetate + phosphate = phosphoenolpyruvate + hydrogencarbonate</text>
        <dbReference type="Rhea" id="RHEA:28370"/>
        <dbReference type="ChEBI" id="CHEBI:16452"/>
        <dbReference type="ChEBI" id="CHEBI:17544"/>
        <dbReference type="ChEBI" id="CHEBI:43474"/>
        <dbReference type="ChEBI" id="CHEBI:58702"/>
        <dbReference type="EC" id="4.1.1.31"/>
    </reaction>
</comment>
<comment type="cofactor">
    <cofactor evidence="1">
        <name>Mg(2+)</name>
        <dbReference type="ChEBI" id="CHEBI:18420"/>
    </cofactor>
</comment>
<comment type="subunit">
    <text evidence="1">Homotetramer.</text>
</comment>
<comment type="similarity">
    <text evidence="1">Belongs to the PEPCase type 2 family.</text>
</comment>
<feature type="chain" id="PRO_0000309595" description="Phosphoenolpyruvate carboxylase">
    <location>
        <begin position="1"/>
        <end position="537"/>
    </location>
</feature>
<sequence>MKIPCSMMTQHPDNVETYISIQQEPAEAIKGLTPQDKGGLGIEEVMIDFEGKLTPYHQTSQIALGLISNGIIPGKDVRVTPRIPNANKESVFRQLMSIMSIIETNVQSKELTGTLAISEVVVPMIETGKEISEFQDRVNSVVDMGNKNYKTKLDLNSVRIIPLVEDVPALVNIDRILDEHYQIEKSKGHVLKDLRIMIARSDTAMSYGLISGVLSVLMAVDGAYKWGEKHGVTISPILGCGSLPFRGHFSEENIDEILATYSGIKTFTFQSALRYDHGEEATKHTVNELKAKIEESKPRNFSEEDKDLMKEFIGICSKHYLQTFLKVIDTVSFVSDFIPKNRDRLTKAKTGLEYNREVANLDNVADLVKDEVLKQEILSIDNSKEYAVPRAISFTGAMYTLGMPPELMGMGRALNEIKTKYGQEGIDKLLEIYPILRKDLAFAARFANGGVSKKIIDEEARQEYKEDMKYVNEILNLGLDYDFLNENEFYHTLLKTTKPIIMHLMGLEENVMRNSTEELKILNEWIVRMGKVRGSIG</sequence>
<gene>
    <name evidence="1" type="primary">ppcA</name>
    <name type="ordered locus">CPR_1157</name>
</gene>
<protein>
    <recommendedName>
        <fullName evidence="1">Phosphoenolpyruvate carboxylase</fullName>
        <shortName evidence="1">PEPC</shortName>
        <shortName evidence="1">PEPCase</shortName>
        <ecNumber evidence="1">4.1.1.31</ecNumber>
    </recommendedName>
</protein>
<dbReference type="EC" id="4.1.1.31" evidence="1"/>
<dbReference type="EMBL" id="CP000312">
    <property type="protein sequence ID" value="ABG87702.1"/>
    <property type="molecule type" value="Genomic_DNA"/>
</dbReference>
<dbReference type="RefSeq" id="WP_011592163.1">
    <property type="nucleotide sequence ID" value="NC_008262.1"/>
</dbReference>
<dbReference type="SMR" id="Q0STS8"/>
<dbReference type="KEGG" id="cpr:CPR_1157"/>
<dbReference type="Proteomes" id="UP000001824">
    <property type="component" value="Chromosome"/>
</dbReference>
<dbReference type="GO" id="GO:0000287">
    <property type="term" value="F:magnesium ion binding"/>
    <property type="evidence" value="ECO:0007669"/>
    <property type="project" value="UniProtKB-UniRule"/>
</dbReference>
<dbReference type="GO" id="GO:0008964">
    <property type="term" value="F:phosphoenolpyruvate carboxylase activity"/>
    <property type="evidence" value="ECO:0007669"/>
    <property type="project" value="UniProtKB-UniRule"/>
</dbReference>
<dbReference type="GO" id="GO:0015977">
    <property type="term" value="P:carbon fixation"/>
    <property type="evidence" value="ECO:0007669"/>
    <property type="project" value="UniProtKB-UniRule"/>
</dbReference>
<dbReference type="GO" id="GO:0006107">
    <property type="term" value="P:oxaloacetate metabolic process"/>
    <property type="evidence" value="ECO:0007669"/>
    <property type="project" value="UniProtKB-UniRule"/>
</dbReference>
<dbReference type="GO" id="GO:0006099">
    <property type="term" value="P:tricarboxylic acid cycle"/>
    <property type="evidence" value="ECO:0007669"/>
    <property type="project" value="InterPro"/>
</dbReference>
<dbReference type="HAMAP" id="MF_01904">
    <property type="entry name" value="PEPcase_type2"/>
    <property type="match status" value="1"/>
</dbReference>
<dbReference type="InterPro" id="IPR007566">
    <property type="entry name" value="PEP_COase_arc-type"/>
</dbReference>
<dbReference type="InterPro" id="IPR015813">
    <property type="entry name" value="Pyrv/PenolPyrv_kinase-like_dom"/>
</dbReference>
<dbReference type="NCBIfam" id="TIGR02751">
    <property type="entry name" value="PEPCase_arch"/>
    <property type="match status" value="1"/>
</dbReference>
<dbReference type="Pfam" id="PF14010">
    <property type="entry name" value="PEPcase_2"/>
    <property type="match status" value="1"/>
</dbReference>
<dbReference type="PIRSF" id="PIRSF006677">
    <property type="entry name" value="UCP006677"/>
    <property type="match status" value="1"/>
</dbReference>
<dbReference type="SUPFAM" id="SSF51621">
    <property type="entry name" value="Phosphoenolpyruvate/pyruvate domain"/>
    <property type="match status" value="1"/>
</dbReference>
<accession>Q0STS8</accession>